<sequence>MNIFRLAGDMTHLASVLVLLLKIHTIKSCAGVSLKTQELYALVFVTRYLDIFTDFISLYNTTMKLVFLGSSLSIVWYMRHHKIVRRSYDKDQDTFRHLFLVLPCLLLALVINEKFTFKEVMWTFSIYLEAVAILPQLVLLQRTRNIDNLTGQYIFLLGAYRSFYILNWVYRYFTEPHFVHWITWIAGLIQTLLYADFFYYYFQSWKNNTKLELPA</sequence>
<organism>
    <name type="scientific">Petunia hybrida</name>
    <name type="common">Petunia</name>
    <dbReference type="NCBI Taxonomy" id="4102"/>
    <lineage>
        <taxon>Eukaryota</taxon>
        <taxon>Viridiplantae</taxon>
        <taxon>Streptophyta</taxon>
        <taxon>Embryophyta</taxon>
        <taxon>Tracheophyta</taxon>
        <taxon>Spermatophyta</taxon>
        <taxon>Magnoliopsida</taxon>
        <taxon>eudicotyledons</taxon>
        <taxon>Gunneridae</taxon>
        <taxon>Pentapetalae</taxon>
        <taxon>asterids</taxon>
        <taxon>lamiids</taxon>
        <taxon>Solanales</taxon>
        <taxon>Solanaceae</taxon>
        <taxon>Petunioideae</taxon>
        <taxon>Petunia</taxon>
    </lineage>
</organism>
<keyword id="KW-0256">Endoplasmic reticulum</keyword>
<keyword id="KW-0931">ER-Golgi transport</keyword>
<keyword id="KW-0472">Membrane</keyword>
<keyword id="KW-0653">Protein transport</keyword>
<keyword id="KW-0675">Receptor</keyword>
<keyword id="KW-0812">Transmembrane</keyword>
<keyword id="KW-1133">Transmembrane helix</keyword>
<keyword id="KW-0813">Transport</keyword>
<feature type="chain" id="PRO_0000194168" description="ER lumen protein-retaining receptor">
    <location>
        <begin position="1"/>
        <end position="215"/>
    </location>
</feature>
<feature type="topological domain" description="Lumenal" evidence="2">
    <location>
        <begin position="1"/>
        <end position="2"/>
    </location>
</feature>
<feature type="transmembrane region" description="Helical" evidence="2">
    <location>
        <begin position="3"/>
        <end position="21"/>
    </location>
</feature>
<feature type="topological domain" description="Cytoplasmic" evidence="2">
    <location>
        <begin position="22"/>
        <end position="35"/>
    </location>
</feature>
<feature type="transmembrane region" description="Helical" evidence="2">
    <location>
        <begin position="36"/>
        <end position="53"/>
    </location>
</feature>
<feature type="topological domain" description="Lumenal" evidence="2">
    <location>
        <begin position="54"/>
        <end position="61"/>
    </location>
</feature>
<feature type="transmembrane region" description="Helical" evidence="2">
    <location>
        <begin position="62"/>
        <end position="82"/>
    </location>
</feature>
<feature type="topological domain" description="Cytoplasmic" evidence="2">
    <location>
        <begin position="83"/>
        <end position="98"/>
    </location>
</feature>
<feature type="transmembrane region" description="Helical" evidence="2">
    <location>
        <begin position="99"/>
        <end position="112"/>
    </location>
</feature>
<feature type="topological domain" description="Lumenal" evidence="2">
    <location>
        <begin position="113"/>
        <end position="119"/>
    </location>
</feature>
<feature type="transmembrane region" description="Helical" evidence="2">
    <location>
        <begin position="120"/>
        <end position="139"/>
    </location>
</feature>
<feature type="topological domain" description="Cytoplasmic" evidence="2">
    <location>
        <begin position="140"/>
        <end position="151"/>
    </location>
</feature>
<feature type="transmembrane region" description="Helical" evidence="2">
    <location>
        <begin position="152"/>
        <end position="170"/>
    </location>
</feature>
<feature type="topological domain" description="Lumenal" evidence="2">
    <location>
        <begin position="171"/>
        <end position="181"/>
    </location>
</feature>
<feature type="transmembrane region" description="Helical" evidence="2">
    <location>
        <begin position="182"/>
        <end position="202"/>
    </location>
</feature>
<feature type="topological domain" description="Cytoplasmic" evidence="2">
    <location>
        <begin position="203"/>
        <end position="215"/>
    </location>
</feature>
<reference key="1">
    <citation type="journal article" date="2000" name="Plant Physiol.">
        <title>Isolation and characterization of cDNAs expressed in the early stages of flavonol-induced pollen germination in petunia.</title>
        <authorList>
            <person name="Guyon V.N."/>
            <person name="Astwood J.D."/>
            <person name="Garner E.C."/>
            <person name="Dunker A.K."/>
            <person name="Taylor L.P."/>
        </authorList>
    </citation>
    <scope>NUCLEOTIDE SEQUENCE [MRNA]</scope>
</reference>
<protein>
    <recommendedName>
        <fullName>ER lumen protein-retaining receptor</fullName>
    </recommendedName>
    <alternativeName>
        <fullName>HDEL receptor</fullName>
    </alternativeName>
    <alternativeName>
        <fullName>PGP169-12</fullName>
    </alternativeName>
</protein>
<proteinExistence type="evidence at transcript level"/>
<comment type="function">
    <text evidence="1">Required for the retention of luminal endoplasmic reticulum proteins. Determines the specificity of the luminal ER protein retention system. Also required for normal vesicular traffic through the Golgi. This receptor recognizes H-D-E-L (By similarity).</text>
</comment>
<comment type="subcellular location">
    <subcellularLocation>
        <location>Endoplasmic reticulum membrane</location>
        <topology>Multi-pass membrane protein</topology>
    </subcellularLocation>
</comment>
<comment type="similarity">
    <text evidence="3">Belongs to the ERD2 family.</text>
</comment>
<gene>
    <name type="primary">ERD2</name>
</gene>
<accession>Q9ZTN2</accession>
<evidence type="ECO:0000250" key="1"/>
<evidence type="ECO:0000255" key="2"/>
<evidence type="ECO:0000305" key="3"/>
<name>ERD2_PETHY</name>
<dbReference type="EMBL" id="AF049922">
    <property type="protein sequence ID" value="AAD02548.1"/>
    <property type="molecule type" value="mRNA"/>
</dbReference>
<dbReference type="SMR" id="Q9ZTN2"/>
<dbReference type="GO" id="GO:0005789">
    <property type="term" value="C:endoplasmic reticulum membrane"/>
    <property type="evidence" value="ECO:0007669"/>
    <property type="project" value="UniProtKB-SubCell"/>
</dbReference>
<dbReference type="GO" id="GO:0046923">
    <property type="term" value="F:ER retention sequence binding"/>
    <property type="evidence" value="ECO:0007669"/>
    <property type="project" value="InterPro"/>
</dbReference>
<dbReference type="GO" id="GO:0006621">
    <property type="term" value="P:protein retention in ER lumen"/>
    <property type="evidence" value="ECO:0007669"/>
    <property type="project" value="InterPro"/>
</dbReference>
<dbReference type="GO" id="GO:0015031">
    <property type="term" value="P:protein transport"/>
    <property type="evidence" value="ECO:0007669"/>
    <property type="project" value="UniProtKB-KW"/>
</dbReference>
<dbReference type="GO" id="GO:0016192">
    <property type="term" value="P:vesicle-mediated transport"/>
    <property type="evidence" value="ECO:0007669"/>
    <property type="project" value="UniProtKB-KW"/>
</dbReference>
<dbReference type="InterPro" id="IPR000133">
    <property type="entry name" value="ER_ret_rcpt"/>
</dbReference>
<dbReference type="PANTHER" id="PTHR10585">
    <property type="entry name" value="ER LUMEN PROTEIN RETAINING RECEPTOR"/>
    <property type="match status" value="1"/>
</dbReference>
<dbReference type="Pfam" id="PF00810">
    <property type="entry name" value="ER_lumen_recept"/>
    <property type="match status" value="1"/>
</dbReference>
<dbReference type="PRINTS" id="PR00660">
    <property type="entry name" value="ERLUMENR"/>
</dbReference>
<dbReference type="PROSITE" id="PS00951">
    <property type="entry name" value="ER_LUMEN_RECEPTOR_1"/>
    <property type="match status" value="1"/>
</dbReference>
<dbReference type="PROSITE" id="PS00952">
    <property type="entry name" value="ER_LUMEN_RECEPTOR_2"/>
    <property type="match status" value="1"/>
</dbReference>